<evidence type="ECO:0000255" key="1">
    <source>
        <dbReference type="HAMAP-Rule" id="MF_00764"/>
    </source>
</evidence>
<comment type="similarity">
    <text evidence="1">Belongs to the UPF0306 family.</text>
</comment>
<reference key="1">
    <citation type="journal article" date="2008" name="J. Bacteriol.">
        <title>The pangenome structure of Escherichia coli: comparative genomic analysis of E. coli commensal and pathogenic isolates.</title>
        <authorList>
            <person name="Rasko D.A."/>
            <person name="Rosovitz M.J."/>
            <person name="Myers G.S.A."/>
            <person name="Mongodin E.F."/>
            <person name="Fricke W.F."/>
            <person name="Gajer P."/>
            <person name="Crabtree J."/>
            <person name="Sebaihia M."/>
            <person name="Thomson N.R."/>
            <person name="Chaudhuri R."/>
            <person name="Henderson I.R."/>
            <person name="Sperandio V."/>
            <person name="Ravel J."/>
        </authorList>
    </citation>
    <scope>NUCLEOTIDE SEQUENCE [LARGE SCALE GENOMIC DNA]</scope>
    <source>
        <strain>E24377A / ETEC</strain>
    </source>
</reference>
<gene>
    <name evidence="1" type="primary">yhbP</name>
    <name type="ordered locus">EcE24377A_3635</name>
</gene>
<sequence length="147" mass="16748">METLITISRWLAKQHVVTWCVQQEGELWCANAFYLFDAQKVAFYILTEEKTRHAQMSGPQAAVAGTVNGQPKTVALIRGVQFKGEIRRLEGEESDLARKAYNRRFPVARMLSAPVWEIRLDEIKFTDNTLGFGKKMIWLRGSGTEQA</sequence>
<feature type="chain" id="PRO_1000062212" description="UPF0306 protein YhbP">
    <location>
        <begin position="1"/>
        <end position="147"/>
    </location>
</feature>
<proteinExistence type="inferred from homology"/>
<name>YHBP_ECO24</name>
<accession>A7ZS49</accession>
<organism>
    <name type="scientific">Escherichia coli O139:H28 (strain E24377A / ETEC)</name>
    <dbReference type="NCBI Taxonomy" id="331111"/>
    <lineage>
        <taxon>Bacteria</taxon>
        <taxon>Pseudomonadati</taxon>
        <taxon>Pseudomonadota</taxon>
        <taxon>Gammaproteobacteria</taxon>
        <taxon>Enterobacterales</taxon>
        <taxon>Enterobacteriaceae</taxon>
        <taxon>Escherichia</taxon>
    </lineage>
</organism>
<keyword id="KW-1185">Reference proteome</keyword>
<dbReference type="EMBL" id="CP000800">
    <property type="protein sequence ID" value="ABV17473.1"/>
    <property type="molecule type" value="Genomic_DNA"/>
</dbReference>
<dbReference type="RefSeq" id="WP_000449041.1">
    <property type="nucleotide sequence ID" value="NC_009801.1"/>
</dbReference>
<dbReference type="SMR" id="A7ZS49"/>
<dbReference type="KEGG" id="ecw:EcE24377A_3635"/>
<dbReference type="HOGENOM" id="CLU_105087_3_0_6"/>
<dbReference type="Proteomes" id="UP000001122">
    <property type="component" value="Chromosome"/>
</dbReference>
<dbReference type="FunFam" id="2.30.110.10:FF:000003">
    <property type="entry name" value="UPF0306 protein YhbP"/>
    <property type="match status" value="1"/>
</dbReference>
<dbReference type="Gene3D" id="2.30.110.10">
    <property type="entry name" value="Electron Transport, Fmn-binding Protein, Chain A"/>
    <property type="match status" value="1"/>
</dbReference>
<dbReference type="HAMAP" id="MF_00764">
    <property type="entry name" value="UPF0306"/>
    <property type="match status" value="1"/>
</dbReference>
<dbReference type="InterPro" id="IPR012349">
    <property type="entry name" value="Split_barrel_FMN-bd"/>
</dbReference>
<dbReference type="InterPro" id="IPR011194">
    <property type="entry name" value="UPF0306"/>
</dbReference>
<dbReference type="NCBIfam" id="NF002900">
    <property type="entry name" value="PRK03467.1"/>
    <property type="match status" value="1"/>
</dbReference>
<dbReference type="PIRSF" id="PIRSF009554">
    <property type="entry name" value="UCP009554"/>
    <property type="match status" value="1"/>
</dbReference>
<dbReference type="SUPFAM" id="SSF50475">
    <property type="entry name" value="FMN-binding split barrel"/>
    <property type="match status" value="1"/>
</dbReference>
<protein>
    <recommendedName>
        <fullName evidence="1">UPF0306 protein YhbP</fullName>
    </recommendedName>
</protein>